<protein>
    <recommendedName>
        <fullName evidence="5">Maltose O-acetyltransferase</fullName>
        <shortName evidence="5">MAT</shortName>
        <ecNumber evidence="2 3">2.3.1.79</ecNumber>
    </recommendedName>
    <alternativeName>
        <fullName evidence="6">Maltose transacetylase</fullName>
    </alternativeName>
</protein>
<proteinExistence type="evidence at protein level"/>
<organism>
    <name type="scientific">Escherichia coli (strain K12)</name>
    <dbReference type="NCBI Taxonomy" id="83333"/>
    <lineage>
        <taxon>Bacteria</taxon>
        <taxon>Pseudomonadati</taxon>
        <taxon>Pseudomonadota</taxon>
        <taxon>Gammaproteobacteria</taxon>
        <taxon>Enterobacterales</taxon>
        <taxon>Enterobacteriaceae</taxon>
        <taxon>Escherichia</taxon>
    </lineage>
</organism>
<keyword id="KW-0002">3D-structure</keyword>
<keyword id="KW-0012">Acyltransferase</keyword>
<keyword id="KW-0903">Direct protein sequencing</keyword>
<keyword id="KW-1185">Reference proteome</keyword>
<keyword id="KW-0677">Repeat</keyword>
<keyword id="KW-0808">Transferase</keyword>
<accession>P77791</accession>
<accession>Q2MBW8</accession>
<feature type="initiator methionine" description="Removed" evidence="4">
    <location>
        <position position="1"/>
    </location>
</feature>
<feature type="chain" id="PRO_0000068729" description="Maltose O-acetyltransferase">
    <location>
        <begin position="2"/>
        <end position="183"/>
    </location>
</feature>
<feature type="active site" description="Proton donor/acceptor" evidence="1">
    <location>
        <position position="113"/>
    </location>
</feature>
<feature type="binding site" description="in other chain" evidence="1">
    <location>
        <position position="83"/>
    </location>
    <ligand>
        <name>acetyl-CoA</name>
        <dbReference type="ChEBI" id="CHEBI:57288"/>
        <note>ligand shared between dimeric partners</note>
    </ligand>
</feature>
<feature type="binding site" description="in other chain" evidence="1">
    <location>
        <position position="140"/>
    </location>
    <ligand>
        <name>acetyl-CoA</name>
        <dbReference type="ChEBI" id="CHEBI:57288"/>
        <note>ligand shared between dimeric partners</note>
    </ligand>
</feature>
<feature type="binding site" description="in other chain" evidence="1">
    <location>
        <position position="158"/>
    </location>
    <ligand>
        <name>acetyl-CoA</name>
        <dbReference type="ChEBI" id="CHEBI:57288"/>
        <note>ligand shared between dimeric partners</note>
    </ligand>
</feature>
<feature type="binding site" evidence="1">
    <location>
        <begin position="163"/>
        <end position="164"/>
    </location>
    <ligand>
        <name>acetyl-CoA</name>
        <dbReference type="ChEBI" id="CHEBI:57288"/>
        <note>ligand shared between dimeric partners</note>
    </ligand>
</feature>
<feature type="binding site" evidence="1">
    <location>
        <position position="178"/>
    </location>
    <ligand>
        <name>acetyl-CoA</name>
        <dbReference type="ChEBI" id="CHEBI:57288"/>
        <note>ligand shared between dimeric partners</note>
    </ligand>
</feature>
<feature type="binding site" description="in other chain" evidence="1">
    <location>
        <position position="181"/>
    </location>
    <ligand>
        <name>acetyl-CoA</name>
        <dbReference type="ChEBI" id="CHEBI:57288"/>
        <note>ligand shared between dimeric partners</note>
    </ligand>
</feature>
<feature type="site" description="Transition state stabilizer" evidence="1">
    <location>
        <position position="83"/>
    </location>
</feature>
<feature type="helix" evidence="8">
    <location>
        <begin position="4"/>
        <end position="10"/>
    </location>
</feature>
<feature type="helix" evidence="8">
    <location>
        <begin position="19"/>
        <end position="37"/>
    </location>
</feature>
<feature type="helix" evidence="8">
    <location>
        <begin position="43"/>
        <end position="53"/>
    </location>
</feature>
<feature type="strand" evidence="8">
    <location>
        <begin position="54"/>
        <end position="56"/>
    </location>
</feature>
<feature type="strand" evidence="8">
    <location>
        <begin position="58"/>
        <end position="62"/>
    </location>
</feature>
<feature type="strand" evidence="8">
    <location>
        <begin position="66"/>
        <end position="69"/>
    </location>
</feature>
<feature type="strand" evidence="8">
    <location>
        <begin position="74"/>
        <end position="76"/>
    </location>
</feature>
<feature type="strand" evidence="8">
    <location>
        <begin position="78"/>
        <end position="82"/>
    </location>
</feature>
<feature type="strand" evidence="8">
    <location>
        <begin position="86"/>
        <end position="89"/>
    </location>
</feature>
<feature type="strand" evidence="8">
    <location>
        <begin position="94"/>
        <end position="96"/>
    </location>
</feature>
<feature type="strand" evidence="8">
    <location>
        <begin position="107"/>
        <end position="109"/>
    </location>
</feature>
<feature type="helix" evidence="8">
    <location>
        <begin position="117"/>
        <end position="121"/>
    </location>
</feature>
<feature type="strand" evidence="8">
    <location>
        <begin position="124"/>
        <end position="127"/>
    </location>
</feature>
<feature type="strand" evidence="8">
    <location>
        <begin position="130"/>
        <end position="132"/>
    </location>
</feature>
<feature type="strand" evidence="8">
    <location>
        <begin position="170"/>
        <end position="173"/>
    </location>
</feature>
<feature type="turn" evidence="8">
    <location>
        <begin position="174"/>
        <end position="177"/>
    </location>
</feature>
<feature type="strand" evidence="8">
    <location>
        <begin position="178"/>
        <end position="182"/>
    </location>
</feature>
<sequence length="183" mass="20096">MSTEKEKMIAGELYRSADETLSRDRLRARQLIHRYNHSLAEEHTLRQQILADLFGQVTEAYIEPTFRCDYGYNIFLGNNFFANFDCVMLDVCPIRIGDNCMLAPGVHIYTATHPIDPVARNSGAELGKPVTIGNNVWIGGRAVINPGVTIGDNVVVASGAVVTKDVPDNVVVGGNPARIIKKL</sequence>
<evidence type="ECO:0000250" key="1">
    <source>
        <dbReference type="UniProtKB" id="P07464"/>
    </source>
</evidence>
<evidence type="ECO:0000269" key="2">
    <source>
    </source>
</evidence>
<evidence type="ECO:0000269" key="3">
    <source>
    </source>
</evidence>
<evidence type="ECO:0000269" key="4">
    <source>
    </source>
</evidence>
<evidence type="ECO:0000303" key="5">
    <source>
    </source>
</evidence>
<evidence type="ECO:0000303" key="6">
    <source>
    </source>
</evidence>
<evidence type="ECO:0000305" key="7"/>
<evidence type="ECO:0007829" key="8">
    <source>
        <dbReference type="PDB" id="6AG8"/>
    </source>
</evidence>
<reference key="1">
    <citation type="submission" date="1998-01" db="EMBL/GenBank/DDBJ databases">
        <authorList>
            <person name="Boehm A.S."/>
        </authorList>
    </citation>
    <scope>NUCLEOTIDE SEQUENCE [GENOMIC DNA]</scope>
    <source>
        <strain>K12 / MC4100 / ATCC 35695 / DSM 6574</strain>
    </source>
</reference>
<reference key="2">
    <citation type="submission" date="1997-01" db="EMBL/GenBank/DDBJ databases">
        <title>Sequence of minutes 4-25 of Escherichia coli.</title>
        <authorList>
            <person name="Chung E."/>
            <person name="Allen E."/>
            <person name="Araujo R."/>
            <person name="Aparicio A.M."/>
            <person name="Davis K."/>
            <person name="Duncan M."/>
            <person name="Federspiel N."/>
            <person name="Hyman R."/>
            <person name="Kalman S."/>
            <person name="Komp C."/>
            <person name="Kurdi O."/>
            <person name="Lew H."/>
            <person name="Lin D."/>
            <person name="Namath A."/>
            <person name="Oefner P."/>
            <person name="Roberts D."/>
            <person name="Schramm S."/>
            <person name="Davis R.W."/>
        </authorList>
    </citation>
    <scope>NUCLEOTIDE SEQUENCE [LARGE SCALE GENOMIC DNA]</scope>
    <source>
        <strain>K12 / MG1655 / ATCC 47076</strain>
    </source>
</reference>
<reference key="3">
    <citation type="journal article" date="1997" name="Science">
        <title>The complete genome sequence of Escherichia coli K-12.</title>
        <authorList>
            <person name="Blattner F.R."/>
            <person name="Plunkett G. III"/>
            <person name="Bloch C.A."/>
            <person name="Perna N.T."/>
            <person name="Burland V."/>
            <person name="Riley M."/>
            <person name="Collado-Vides J."/>
            <person name="Glasner J.D."/>
            <person name="Rode C.K."/>
            <person name="Mayhew G.F."/>
            <person name="Gregor J."/>
            <person name="Davis N.W."/>
            <person name="Kirkpatrick H.A."/>
            <person name="Goeden M.A."/>
            <person name="Rose D.J."/>
            <person name="Mau B."/>
            <person name="Shao Y."/>
        </authorList>
    </citation>
    <scope>NUCLEOTIDE SEQUENCE [LARGE SCALE GENOMIC DNA]</scope>
    <source>
        <strain>K12 / MG1655 / ATCC 47076</strain>
    </source>
</reference>
<reference key="4">
    <citation type="journal article" date="2006" name="Mol. Syst. Biol.">
        <title>Highly accurate genome sequences of Escherichia coli K-12 strains MG1655 and W3110.</title>
        <authorList>
            <person name="Hayashi K."/>
            <person name="Morooka N."/>
            <person name="Yamamoto Y."/>
            <person name="Fujita K."/>
            <person name="Isono K."/>
            <person name="Choi S."/>
            <person name="Ohtsubo E."/>
            <person name="Baba T."/>
            <person name="Wanner B.L."/>
            <person name="Mori H."/>
            <person name="Horiuchi T."/>
        </authorList>
    </citation>
    <scope>NUCLEOTIDE SEQUENCE [LARGE SCALE GENOMIC DNA]</scope>
    <source>
        <strain>K12 / W3110 / ATCC 27325 / DSM 5911</strain>
    </source>
</reference>
<reference key="5">
    <citation type="journal article" date="1998" name="J. Mol. Biol.">
        <title>Protein identification with N and C-terminal sequence tags in proteome projects.</title>
        <authorList>
            <person name="Wilkins M.R."/>
            <person name="Gasteiger E."/>
            <person name="Tonella L."/>
            <person name="Ou K."/>
            <person name="Tyler M."/>
            <person name="Sanchez J.-C."/>
            <person name="Gooley A.A."/>
            <person name="Walsh B.J."/>
            <person name="Bairoch A."/>
            <person name="Appel R.D."/>
            <person name="Williams K.L."/>
            <person name="Hochstrasser D.F."/>
        </authorList>
    </citation>
    <scope>PROTEIN SEQUENCE OF 2-5</scope>
    <source>
        <strain>K12 / W3110 / ATCC 27325 / DSM 5911</strain>
    </source>
</reference>
<reference key="6">
    <citation type="journal article" date="1991" name="J. Biol. Chem.">
        <title>Maltose transacetylase of Escherichia coli. Mapping and cloning of its structural, gene, mac, and characterization of the enzyme as a dimer of identical polypeptides with a molecular weight of 20,000.</title>
        <authorList>
            <person name="Brand B."/>
            <person name="Boos W."/>
        </authorList>
    </citation>
    <scope>FUNCTION</scope>
    <scope>CATALYTIC ACTIVITY</scope>
    <scope>BIOPHYSICOCHEMICAL PROPERTIES</scope>
    <scope>SUBUNIT</scope>
</reference>
<reference key="7">
    <citation type="journal article" date="2003" name="Biochemistry">
        <title>The structure and specificity of Escherichia coli maltose acetyltransferase give new insight into the LacA family of acyltransferases.</title>
        <authorList>
            <person name="Lo Leggio L."/>
            <person name="Dal Degan F."/>
            <person name="Poulsen P."/>
            <person name="Andersen S.M."/>
            <person name="Larsen S."/>
        </authorList>
    </citation>
    <scope>X-RAY CRYSTALLOGRAPHY (2.15 ANGSTROMS)</scope>
    <scope>CATALYTIC ACTIVITY</scope>
    <scope>BIOPHYSICOCHEMICAL PROPERTIES</scope>
</reference>
<dbReference type="EC" id="2.3.1.79" evidence="2 3"/>
<dbReference type="EMBL" id="AJ223173">
    <property type="protein sequence ID" value="CAA11147.1"/>
    <property type="molecule type" value="Genomic_DNA"/>
</dbReference>
<dbReference type="EMBL" id="U82664">
    <property type="protein sequence ID" value="AAB40214.1"/>
    <property type="molecule type" value="Genomic_DNA"/>
</dbReference>
<dbReference type="EMBL" id="U00096">
    <property type="protein sequence ID" value="AAC73561.1"/>
    <property type="molecule type" value="Genomic_DNA"/>
</dbReference>
<dbReference type="EMBL" id="AP009048">
    <property type="protein sequence ID" value="BAE76238.1"/>
    <property type="molecule type" value="Genomic_DNA"/>
</dbReference>
<dbReference type="PIR" id="B64776">
    <property type="entry name" value="B64776"/>
</dbReference>
<dbReference type="RefSeq" id="NP_414992.1">
    <property type="nucleotide sequence ID" value="NC_000913.3"/>
</dbReference>
<dbReference type="RefSeq" id="WP_000102564.1">
    <property type="nucleotide sequence ID" value="NZ_SSUW01000008.1"/>
</dbReference>
<dbReference type="PDB" id="1OCX">
    <property type="method" value="X-ray"/>
    <property type="resolution" value="2.15 A"/>
    <property type="chains" value="A/B/C=2-183"/>
</dbReference>
<dbReference type="PDB" id="6AG8">
    <property type="method" value="X-ray"/>
    <property type="resolution" value="1.34 A"/>
    <property type="chains" value="A/C=1-183"/>
</dbReference>
<dbReference type="PDBsum" id="1OCX"/>
<dbReference type="PDBsum" id="6AG8"/>
<dbReference type="SMR" id="P77791"/>
<dbReference type="BioGRID" id="4261202">
    <property type="interactions" value="20"/>
</dbReference>
<dbReference type="DIP" id="DIP-10140N"/>
<dbReference type="FunCoup" id="P77791">
    <property type="interactions" value="337"/>
</dbReference>
<dbReference type="IntAct" id="P77791">
    <property type="interactions" value="16"/>
</dbReference>
<dbReference type="STRING" id="511145.b0459"/>
<dbReference type="jPOST" id="P77791"/>
<dbReference type="PaxDb" id="511145-b0459"/>
<dbReference type="EnsemblBacteria" id="AAC73561">
    <property type="protein sequence ID" value="AAC73561"/>
    <property type="gene ID" value="b0459"/>
</dbReference>
<dbReference type="GeneID" id="93776991"/>
<dbReference type="GeneID" id="945096"/>
<dbReference type="KEGG" id="ecj:JW0448"/>
<dbReference type="KEGG" id="eco:b0459"/>
<dbReference type="KEGG" id="ecoc:C3026_02250"/>
<dbReference type="PATRIC" id="fig|1411691.4.peg.1817"/>
<dbReference type="EchoBASE" id="EB3990"/>
<dbReference type="eggNOG" id="COG0110">
    <property type="taxonomic scope" value="Bacteria"/>
</dbReference>
<dbReference type="HOGENOM" id="CLU_051638_3_3_6"/>
<dbReference type="InParanoid" id="P77791"/>
<dbReference type="OMA" id="CVILDCN"/>
<dbReference type="OrthoDB" id="9815592at2"/>
<dbReference type="PhylomeDB" id="P77791"/>
<dbReference type="BioCyc" id="EcoCyc:MALTACETYLTRAN-MONOMER"/>
<dbReference type="BioCyc" id="MetaCyc:MALTACETYLTRAN-MONOMER"/>
<dbReference type="BRENDA" id="2.3.1.79">
    <property type="organism ID" value="2026"/>
</dbReference>
<dbReference type="EvolutionaryTrace" id="P77791"/>
<dbReference type="PRO" id="PR:P77791"/>
<dbReference type="Proteomes" id="UP000000625">
    <property type="component" value="Chromosome"/>
</dbReference>
<dbReference type="GO" id="GO:0032991">
    <property type="term" value="C:protein-containing complex"/>
    <property type="evidence" value="ECO:0000314"/>
    <property type="project" value="EcoCyc"/>
</dbReference>
<dbReference type="GO" id="GO:0042802">
    <property type="term" value="F:identical protein binding"/>
    <property type="evidence" value="ECO:0000314"/>
    <property type="project" value="EcoCyc"/>
</dbReference>
<dbReference type="GO" id="GO:0008925">
    <property type="term" value="F:maltose O-acetyltransferase activity"/>
    <property type="evidence" value="ECO:0000314"/>
    <property type="project" value="EcoCyc"/>
</dbReference>
<dbReference type="GO" id="GO:0008374">
    <property type="term" value="F:O-acyltransferase activity"/>
    <property type="evidence" value="ECO:0000318"/>
    <property type="project" value="GO_Central"/>
</dbReference>
<dbReference type="CDD" id="cd03357">
    <property type="entry name" value="LbH_MAT_GAT"/>
    <property type="match status" value="1"/>
</dbReference>
<dbReference type="FunFam" id="2.160.10.10:FF:000008">
    <property type="entry name" value="Maltose O-acetyltransferase"/>
    <property type="match status" value="1"/>
</dbReference>
<dbReference type="Gene3D" id="2.160.10.10">
    <property type="entry name" value="Hexapeptide repeat proteins"/>
    <property type="match status" value="1"/>
</dbReference>
<dbReference type="InterPro" id="IPR001451">
    <property type="entry name" value="Hexapep"/>
</dbReference>
<dbReference type="InterPro" id="IPR018357">
    <property type="entry name" value="Hexapep_transf_CS"/>
</dbReference>
<dbReference type="InterPro" id="IPR051159">
    <property type="entry name" value="Hexapeptide_acetyltransf"/>
</dbReference>
<dbReference type="InterPro" id="IPR024688">
    <property type="entry name" value="Mac_dom"/>
</dbReference>
<dbReference type="InterPro" id="IPR011004">
    <property type="entry name" value="Trimer_LpxA-like_sf"/>
</dbReference>
<dbReference type="NCBIfam" id="NF007499">
    <property type="entry name" value="PRK10092.1"/>
    <property type="match status" value="1"/>
</dbReference>
<dbReference type="PANTHER" id="PTHR23416:SF23">
    <property type="entry name" value="ACETYLTRANSFERASE C18B11.09C-RELATED"/>
    <property type="match status" value="1"/>
</dbReference>
<dbReference type="PANTHER" id="PTHR23416">
    <property type="entry name" value="SIALIC ACID SYNTHASE-RELATED"/>
    <property type="match status" value="1"/>
</dbReference>
<dbReference type="Pfam" id="PF00132">
    <property type="entry name" value="Hexapep"/>
    <property type="match status" value="1"/>
</dbReference>
<dbReference type="Pfam" id="PF14602">
    <property type="entry name" value="Hexapep_2"/>
    <property type="match status" value="1"/>
</dbReference>
<dbReference type="Pfam" id="PF12464">
    <property type="entry name" value="Mac"/>
    <property type="match status" value="1"/>
</dbReference>
<dbReference type="SMART" id="SM01266">
    <property type="entry name" value="Mac"/>
    <property type="match status" value="1"/>
</dbReference>
<dbReference type="SUPFAM" id="SSF51161">
    <property type="entry name" value="Trimeric LpxA-like enzymes"/>
    <property type="match status" value="1"/>
</dbReference>
<dbReference type="PROSITE" id="PS00101">
    <property type="entry name" value="HEXAPEP_TRANSFERASES"/>
    <property type="match status" value="1"/>
</dbReference>
<name>MAA_ECOLI</name>
<gene>
    <name type="primary">maa</name>
    <name type="synonym">ylaD</name>
    <name type="ordered locus">b0459</name>
    <name type="ordered locus">JW0448</name>
</gene>
<comment type="function">
    <text evidence="2 3">Catalyzes the CoA-dependent transfer of an acetyl group to maltose and other sugars (PubMed:1856235). Acetylates glucose exclusively at the C6 position and maltose at the C6 position of the non-reducing end glucosyl moiety. Is able to acetylate maltooligosaccharides (PubMed:12731863).</text>
</comment>
<comment type="catalytic activity">
    <reaction evidence="2 3">
        <text>D-maltose + acetyl-CoA = 1-O-acetylmaltose + CoA</text>
        <dbReference type="Rhea" id="RHEA:10456"/>
        <dbReference type="ChEBI" id="CHEBI:13714"/>
        <dbReference type="ChEBI" id="CHEBI:17306"/>
        <dbReference type="ChEBI" id="CHEBI:57287"/>
        <dbReference type="ChEBI" id="CHEBI:57288"/>
        <dbReference type="EC" id="2.3.1.79"/>
    </reaction>
</comment>
<comment type="biophysicochemical properties">
    <kinetics>
        <KM evidence="3">62 mM for glucose</KM>
        <KM evidence="3">90 mM for maltose</KM>
        <KM evidence="2">71 mM for glucose</KM>
        <KM evidence="2">42.9 mM for maltose</KM>
        <KM evidence="2">285.5 mM for maltotriose</KM>
        <Vmax evidence="3">0.2 mmol/min/mg enzyme with glucose as substrate</Vmax>
        <Vmax evidence="3">0.11 mmol/min/mg enzyme with maltose as substrate</Vmax>
        <text evidence="3">Acetylates glucose, maltose, mannose, galactose, and fructose with a decreasing relative rate of 1, 0.55, 0.20, 0.07, 0.04.</text>
    </kinetics>
    <phDependence>
        <text evidence="2">Optimum pH is 7.8.</text>
    </phDependence>
</comment>
<comment type="subunit">
    <text evidence="3">Homodimer.</text>
</comment>
<comment type="similarity">
    <text evidence="7">Belongs to the transferase hexapeptide repeat family.</text>
</comment>